<protein>
    <recommendedName>
        <fullName>GATA transcription factor 10</fullName>
    </recommendedName>
</protein>
<feature type="chain" id="PRO_0000083434" description="GATA transcription factor 10">
    <location>
        <begin position="1"/>
        <end position="308"/>
    </location>
</feature>
<feature type="zinc finger region" description="GATA-type" evidence="2">
    <location>
        <begin position="214"/>
        <end position="268"/>
    </location>
</feature>
<proteinExistence type="evidence at protein level"/>
<accession>Q8VZP4</accession>
<accession>Q9LN07</accession>
<reference key="1">
    <citation type="journal article" date="2000" name="Nature">
        <title>Sequence and analysis of chromosome 1 of the plant Arabidopsis thaliana.</title>
        <authorList>
            <person name="Theologis A."/>
            <person name="Ecker J.R."/>
            <person name="Palm C.J."/>
            <person name="Federspiel N.A."/>
            <person name="Kaul S."/>
            <person name="White O."/>
            <person name="Alonso J."/>
            <person name="Altafi H."/>
            <person name="Araujo R."/>
            <person name="Bowman C.L."/>
            <person name="Brooks S.Y."/>
            <person name="Buehler E."/>
            <person name="Chan A."/>
            <person name="Chao Q."/>
            <person name="Chen H."/>
            <person name="Cheuk R.F."/>
            <person name="Chin C.W."/>
            <person name="Chung M.K."/>
            <person name="Conn L."/>
            <person name="Conway A.B."/>
            <person name="Conway A.R."/>
            <person name="Creasy T.H."/>
            <person name="Dewar K."/>
            <person name="Dunn P."/>
            <person name="Etgu P."/>
            <person name="Feldblyum T.V."/>
            <person name="Feng J.-D."/>
            <person name="Fong B."/>
            <person name="Fujii C.Y."/>
            <person name="Gill J.E."/>
            <person name="Goldsmith A.D."/>
            <person name="Haas B."/>
            <person name="Hansen N.F."/>
            <person name="Hughes B."/>
            <person name="Huizar L."/>
            <person name="Hunter J.L."/>
            <person name="Jenkins J."/>
            <person name="Johnson-Hopson C."/>
            <person name="Khan S."/>
            <person name="Khaykin E."/>
            <person name="Kim C.J."/>
            <person name="Koo H.L."/>
            <person name="Kremenetskaia I."/>
            <person name="Kurtz D.B."/>
            <person name="Kwan A."/>
            <person name="Lam B."/>
            <person name="Langin-Hooper S."/>
            <person name="Lee A."/>
            <person name="Lee J.M."/>
            <person name="Lenz C.A."/>
            <person name="Li J.H."/>
            <person name="Li Y.-P."/>
            <person name="Lin X."/>
            <person name="Liu S.X."/>
            <person name="Liu Z.A."/>
            <person name="Luros J.S."/>
            <person name="Maiti R."/>
            <person name="Marziali A."/>
            <person name="Militscher J."/>
            <person name="Miranda M."/>
            <person name="Nguyen M."/>
            <person name="Nierman W.C."/>
            <person name="Osborne B.I."/>
            <person name="Pai G."/>
            <person name="Peterson J."/>
            <person name="Pham P.K."/>
            <person name="Rizzo M."/>
            <person name="Rooney T."/>
            <person name="Rowley D."/>
            <person name="Sakano H."/>
            <person name="Salzberg S.L."/>
            <person name="Schwartz J.R."/>
            <person name="Shinn P."/>
            <person name="Southwick A.M."/>
            <person name="Sun H."/>
            <person name="Tallon L.J."/>
            <person name="Tambunga G."/>
            <person name="Toriumi M.J."/>
            <person name="Town C.D."/>
            <person name="Utterback T."/>
            <person name="Van Aken S."/>
            <person name="Vaysberg M."/>
            <person name="Vysotskaia V.S."/>
            <person name="Walker M."/>
            <person name="Wu D."/>
            <person name="Yu G."/>
            <person name="Fraser C.M."/>
            <person name="Venter J.C."/>
            <person name="Davis R.W."/>
        </authorList>
    </citation>
    <scope>NUCLEOTIDE SEQUENCE [LARGE SCALE GENOMIC DNA]</scope>
    <source>
        <strain>cv. Columbia</strain>
    </source>
</reference>
<reference key="2">
    <citation type="journal article" date="2017" name="Plant J.">
        <title>Araport11: a complete reannotation of the Arabidopsis thaliana reference genome.</title>
        <authorList>
            <person name="Cheng C.Y."/>
            <person name="Krishnakumar V."/>
            <person name="Chan A.P."/>
            <person name="Thibaud-Nissen F."/>
            <person name="Schobel S."/>
            <person name="Town C.D."/>
        </authorList>
    </citation>
    <scope>GENOME REANNOTATION</scope>
    <source>
        <strain>cv. Columbia</strain>
    </source>
</reference>
<reference key="3">
    <citation type="journal article" date="2003" name="Science">
        <title>Empirical analysis of transcriptional activity in the Arabidopsis genome.</title>
        <authorList>
            <person name="Yamada K."/>
            <person name="Lim J."/>
            <person name="Dale J.M."/>
            <person name="Chen H."/>
            <person name="Shinn P."/>
            <person name="Palm C.J."/>
            <person name="Southwick A.M."/>
            <person name="Wu H.C."/>
            <person name="Kim C.J."/>
            <person name="Nguyen M."/>
            <person name="Pham P.K."/>
            <person name="Cheuk R.F."/>
            <person name="Karlin-Newmann G."/>
            <person name="Liu S.X."/>
            <person name="Lam B."/>
            <person name="Sakano H."/>
            <person name="Wu T."/>
            <person name="Yu G."/>
            <person name="Miranda M."/>
            <person name="Quach H.L."/>
            <person name="Tripp M."/>
            <person name="Chang C.H."/>
            <person name="Lee J.M."/>
            <person name="Toriumi M.J."/>
            <person name="Chan M.M."/>
            <person name="Tang C.C."/>
            <person name="Onodera C.S."/>
            <person name="Deng J.M."/>
            <person name="Akiyama K."/>
            <person name="Ansari Y."/>
            <person name="Arakawa T."/>
            <person name="Banh J."/>
            <person name="Banno F."/>
            <person name="Bowser L."/>
            <person name="Brooks S.Y."/>
            <person name="Carninci P."/>
            <person name="Chao Q."/>
            <person name="Choy N."/>
            <person name="Enju A."/>
            <person name="Goldsmith A.D."/>
            <person name="Gurjal M."/>
            <person name="Hansen N.F."/>
            <person name="Hayashizaki Y."/>
            <person name="Johnson-Hopson C."/>
            <person name="Hsuan V.W."/>
            <person name="Iida K."/>
            <person name="Karnes M."/>
            <person name="Khan S."/>
            <person name="Koesema E."/>
            <person name="Ishida J."/>
            <person name="Jiang P.X."/>
            <person name="Jones T."/>
            <person name="Kawai J."/>
            <person name="Kamiya A."/>
            <person name="Meyers C."/>
            <person name="Nakajima M."/>
            <person name="Narusaka M."/>
            <person name="Seki M."/>
            <person name="Sakurai T."/>
            <person name="Satou M."/>
            <person name="Tamse R."/>
            <person name="Vaysberg M."/>
            <person name="Wallender E.K."/>
            <person name="Wong C."/>
            <person name="Yamamura Y."/>
            <person name="Yuan S."/>
            <person name="Shinozaki K."/>
            <person name="Davis R.W."/>
            <person name="Theologis A."/>
            <person name="Ecker J.R."/>
        </authorList>
    </citation>
    <scope>NUCLEOTIDE SEQUENCE [LARGE SCALE MRNA]</scope>
    <source>
        <strain>cv. Columbia</strain>
    </source>
</reference>
<reference key="4">
    <citation type="journal article" date="2004" name="Plant Physiol.">
        <title>The GATA family of transcription factors in Arabidopsis and rice.</title>
        <authorList>
            <person name="Reyes J.C."/>
            <person name="Muro-Pastor M.I."/>
            <person name="Florencio F.J."/>
        </authorList>
    </citation>
    <scope>GENE FAMILY ORGANIZATION</scope>
</reference>
<sequence>MNWLPEAEAEEHLKGILSGDFFDGLTNHLDCPLEDIDSTNGEGDWVARFQDLEPPPLDMFPALPSDLTSCPKGAARVRIPNNMIPALKQSCSSEALSGINSTPHQSSAPPDIKVSYLFQSLTPVSVLENSYGSLSTQNSGSQRLAFPVKGMRSKRRRPTTVRLSYLFPFEPRKSTPGESVTEGYYSSEQHAKKKRKIHLITHTESSTLESSKSDGIVRICTHCETITTPQWRQGPSGPKTLCNACGVRFKSGRLVPEYRPASSPTFIPSVHSNSHRKIIEMRKKDDEFDTSMIRSDIQKVKQGRKKMV</sequence>
<evidence type="ECO:0000250" key="1"/>
<evidence type="ECO:0000255" key="2">
    <source>
        <dbReference type="PROSITE-ProRule" id="PRU00094"/>
    </source>
</evidence>
<evidence type="ECO:0000305" key="3"/>
<name>GAT10_ARATH</name>
<gene>
    <name type="primary">GATA10</name>
    <name type="ordered locus">At1g08000</name>
    <name type="ORF">T6D22.9</name>
</gene>
<organism>
    <name type="scientific">Arabidopsis thaliana</name>
    <name type="common">Mouse-ear cress</name>
    <dbReference type="NCBI Taxonomy" id="3702"/>
    <lineage>
        <taxon>Eukaryota</taxon>
        <taxon>Viridiplantae</taxon>
        <taxon>Streptophyta</taxon>
        <taxon>Embryophyta</taxon>
        <taxon>Tracheophyta</taxon>
        <taxon>Spermatophyta</taxon>
        <taxon>Magnoliopsida</taxon>
        <taxon>eudicotyledons</taxon>
        <taxon>Gunneridae</taxon>
        <taxon>Pentapetalae</taxon>
        <taxon>rosids</taxon>
        <taxon>malvids</taxon>
        <taxon>Brassicales</taxon>
        <taxon>Brassicaceae</taxon>
        <taxon>Camelineae</taxon>
        <taxon>Arabidopsis</taxon>
    </lineage>
</organism>
<keyword id="KW-0010">Activator</keyword>
<keyword id="KW-0238">DNA-binding</keyword>
<keyword id="KW-0479">Metal-binding</keyword>
<keyword id="KW-0539">Nucleus</keyword>
<keyword id="KW-1185">Reference proteome</keyword>
<keyword id="KW-0804">Transcription</keyword>
<keyword id="KW-0805">Transcription regulation</keyword>
<keyword id="KW-0862">Zinc</keyword>
<keyword id="KW-0863">Zinc-finger</keyword>
<comment type="function">
    <text evidence="1">Transcriptional activator that specifically binds 5'-GATA-3' or 5'-GAT-3' motifs within gene promoters. May be involved in the regulation of some light-responsive genes (By similarity).</text>
</comment>
<comment type="interaction">
    <interactant intactId="EBI-15198801">
        <id>Q8VZP4</id>
    </interactant>
    <interactant intactId="EBI-15191793">
        <id>O82617</id>
        <label>BBX23</label>
    </interactant>
    <organismsDiffer>false</organismsDiffer>
    <experiments>3</experiments>
</comment>
<comment type="subcellular location">
    <subcellularLocation>
        <location evidence="3">Nucleus</location>
    </subcellularLocation>
</comment>
<comment type="similarity">
    <text evidence="3">Belongs to the type IV zinc-finger family. Class A subfamily.</text>
</comment>
<comment type="sequence caution" evidence="3">
    <conflict type="erroneous gene model prediction">
        <sequence resource="EMBL-CDS" id="AAF79843"/>
    </conflict>
    <text>The predicted gene At1g08000 has been split into 2 genes: At1g08000 and At1g08010.</text>
</comment>
<dbReference type="EMBL" id="AC026875">
    <property type="protein sequence ID" value="AAF79843.1"/>
    <property type="status" value="ALT_SEQ"/>
    <property type="molecule type" value="Genomic_DNA"/>
</dbReference>
<dbReference type="EMBL" id="CP002684">
    <property type="protein sequence ID" value="AEE28225.1"/>
    <property type="molecule type" value="Genomic_DNA"/>
</dbReference>
<dbReference type="EMBL" id="CP002684">
    <property type="protein sequence ID" value="AEE28226.1"/>
    <property type="molecule type" value="Genomic_DNA"/>
</dbReference>
<dbReference type="EMBL" id="AY063953">
    <property type="protein sequence ID" value="AAL36309.1"/>
    <property type="molecule type" value="mRNA"/>
</dbReference>
<dbReference type="EMBL" id="AY096723">
    <property type="protein sequence ID" value="AAM20357.1"/>
    <property type="molecule type" value="mRNA"/>
</dbReference>
<dbReference type="RefSeq" id="NP_172278.1">
    <property type="nucleotide sequence ID" value="NM_100674.3"/>
</dbReference>
<dbReference type="RefSeq" id="NP_973790.1">
    <property type="nucleotide sequence ID" value="NM_202061.2"/>
</dbReference>
<dbReference type="SMR" id="Q8VZP4"/>
<dbReference type="BioGRID" id="22556">
    <property type="interactions" value="5"/>
</dbReference>
<dbReference type="FunCoup" id="Q8VZP4">
    <property type="interactions" value="87"/>
</dbReference>
<dbReference type="IntAct" id="Q8VZP4">
    <property type="interactions" value="5"/>
</dbReference>
<dbReference type="STRING" id="3702.Q8VZP4"/>
<dbReference type="PaxDb" id="3702-AT1G08000.2"/>
<dbReference type="ProteomicsDB" id="247387"/>
<dbReference type="EnsemblPlants" id="AT1G08000.1">
    <property type="protein sequence ID" value="AT1G08000.1"/>
    <property type="gene ID" value="AT1G08000"/>
</dbReference>
<dbReference type="EnsemblPlants" id="AT1G08000.2">
    <property type="protein sequence ID" value="AT1G08000.2"/>
    <property type="gene ID" value="AT1G08000"/>
</dbReference>
<dbReference type="GeneID" id="837315"/>
<dbReference type="Gramene" id="AT1G08000.1">
    <property type="protein sequence ID" value="AT1G08000.1"/>
    <property type="gene ID" value="AT1G08000"/>
</dbReference>
<dbReference type="Gramene" id="AT1G08000.2">
    <property type="protein sequence ID" value="AT1G08000.2"/>
    <property type="gene ID" value="AT1G08000"/>
</dbReference>
<dbReference type="KEGG" id="ath:AT1G08000"/>
<dbReference type="Araport" id="AT1G08000"/>
<dbReference type="TAIR" id="AT1G08000">
    <property type="gene designation" value="GATA10"/>
</dbReference>
<dbReference type="eggNOG" id="KOG1601">
    <property type="taxonomic scope" value="Eukaryota"/>
</dbReference>
<dbReference type="HOGENOM" id="CLU_045755_2_1_1"/>
<dbReference type="InParanoid" id="Q8VZP4"/>
<dbReference type="OMA" id="CNGISPI"/>
<dbReference type="OrthoDB" id="2162994at2759"/>
<dbReference type="PhylomeDB" id="Q8VZP4"/>
<dbReference type="PRO" id="PR:Q8VZP4"/>
<dbReference type="Proteomes" id="UP000006548">
    <property type="component" value="Chromosome 1"/>
</dbReference>
<dbReference type="ExpressionAtlas" id="Q8VZP4">
    <property type="expression patterns" value="baseline and differential"/>
</dbReference>
<dbReference type="GO" id="GO:0005634">
    <property type="term" value="C:nucleus"/>
    <property type="evidence" value="ECO:0007669"/>
    <property type="project" value="UniProtKB-SubCell"/>
</dbReference>
<dbReference type="GO" id="GO:0003700">
    <property type="term" value="F:DNA-binding transcription factor activity"/>
    <property type="evidence" value="ECO:0000250"/>
    <property type="project" value="TAIR"/>
</dbReference>
<dbReference type="GO" id="GO:0043565">
    <property type="term" value="F:sequence-specific DNA binding"/>
    <property type="evidence" value="ECO:0007669"/>
    <property type="project" value="InterPro"/>
</dbReference>
<dbReference type="GO" id="GO:0008270">
    <property type="term" value="F:zinc ion binding"/>
    <property type="evidence" value="ECO:0007669"/>
    <property type="project" value="UniProtKB-KW"/>
</dbReference>
<dbReference type="CDD" id="cd00202">
    <property type="entry name" value="ZnF_GATA"/>
    <property type="match status" value="1"/>
</dbReference>
<dbReference type="FunFam" id="3.30.50.10:FF:000018">
    <property type="entry name" value="GATA transcription factor"/>
    <property type="match status" value="1"/>
</dbReference>
<dbReference type="Gene3D" id="3.30.50.10">
    <property type="entry name" value="Erythroid Transcription Factor GATA-1, subunit A"/>
    <property type="match status" value="1"/>
</dbReference>
<dbReference type="InterPro" id="IPR051140">
    <property type="entry name" value="GATA_TF"/>
</dbReference>
<dbReference type="InterPro" id="IPR000679">
    <property type="entry name" value="Znf_GATA"/>
</dbReference>
<dbReference type="InterPro" id="IPR013088">
    <property type="entry name" value="Znf_NHR/GATA"/>
</dbReference>
<dbReference type="PANTHER" id="PTHR45658">
    <property type="entry name" value="GATA TRANSCRIPTION FACTOR"/>
    <property type="match status" value="1"/>
</dbReference>
<dbReference type="PANTHER" id="PTHR45658:SF154">
    <property type="entry name" value="GATA TRANSCRIPTION FACTOR 10-RELATED"/>
    <property type="match status" value="1"/>
</dbReference>
<dbReference type="Pfam" id="PF00320">
    <property type="entry name" value="GATA"/>
    <property type="match status" value="1"/>
</dbReference>
<dbReference type="SMART" id="SM00401">
    <property type="entry name" value="ZnF_GATA"/>
    <property type="match status" value="1"/>
</dbReference>
<dbReference type="SUPFAM" id="SSF57716">
    <property type="entry name" value="Glucocorticoid receptor-like (DNA-binding domain)"/>
    <property type="match status" value="1"/>
</dbReference>
<dbReference type="PROSITE" id="PS00344">
    <property type="entry name" value="GATA_ZN_FINGER_1"/>
    <property type="match status" value="1"/>
</dbReference>
<dbReference type="PROSITE" id="PS50114">
    <property type="entry name" value="GATA_ZN_FINGER_2"/>
    <property type="match status" value="1"/>
</dbReference>